<proteinExistence type="inferred from homology"/>
<keyword id="KW-0143">Chaperone</keyword>
<keyword id="KW-0472">Membrane</keyword>
<keyword id="KW-0496">Mitochondrion</keyword>
<keyword id="KW-0999">Mitochondrion inner membrane</keyword>
<keyword id="KW-0653">Protein transport</keyword>
<keyword id="KW-1185">Reference proteome</keyword>
<keyword id="KW-0811">Translocation</keyword>
<keyword id="KW-0812">Transmembrane</keyword>
<keyword id="KW-1133">Transmembrane helix</keyword>
<keyword id="KW-0813">Transport</keyword>
<feature type="chain" id="PRO_0000071104" description="Mitochondrial import inner membrane translocase subunit TIM14">
    <location>
        <begin position="1"/>
        <end position="111"/>
    </location>
</feature>
<feature type="topological domain" description="Mitochondrial intermembrane" evidence="2">
    <location>
        <begin position="1"/>
        <end position="3"/>
    </location>
</feature>
<feature type="transmembrane region" description="Helical" evidence="2">
    <location>
        <begin position="4"/>
        <end position="24"/>
    </location>
</feature>
<feature type="topological domain" description="Mitochondrial matrix" evidence="2">
    <location>
        <begin position="25"/>
        <end position="111"/>
    </location>
</feature>
<feature type="domain" description="J" evidence="3">
    <location>
        <begin position="58"/>
        <end position="111"/>
    </location>
</feature>
<comment type="function">
    <text evidence="1">Probable component of the PAM complex, a complex required for the translocation of transit peptide-containing proteins from the inner membrane into the mitochondrial matrix in an ATP-dependent manner. May act as a co-chaperone that stimulate the ATP-dependent activity (By similarity).</text>
</comment>
<comment type="subunit">
    <text evidence="1">Probable component of the PAM complex at least composed of a mitochondrial HSP70 protein, GrpE, tim-44, tim-16 and tim-14.</text>
</comment>
<comment type="subcellular location">
    <subcellularLocation>
        <location evidence="1">Mitochondrion inner membrane</location>
        <topology evidence="1">Single-pass membrane protein</topology>
    </subcellularLocation>
</comment>
<comment type="similarity">
    <text evidence="4">Belongs to the TIM14 family.</text>
</comment>
<sequence length="111" mass="11658">MTGGLIAAGLGLAAVGFGARYVLRNQALIKKGMEALPVAGGLNSYYRGGFDQKMSRSEAAKILGITPSAKPAKIKDAHKKVMIVNHPDRGGSPYLAAKINEAKDLMESTKS</sequence>
<accession>Q617M0</accession>
<accession>A8XKZ5</accession>
<name>TIM14_CAEBR</name>
<reference key="1">
    <citation type="journal article" date="2003" name="PLoS Biol.">
        <title>The genome sequence of Caenorhabditis briggsae: a platform for comparative genomics.</title>
        <authorList>
            <person name="Stein L.D."/>
            <person name="Bao Z."/>
            <person name="Blasiar D."/>
            <person name="Blumenthal T."/>
            <person name="Brent M.R."/>
            <person name="Chen N."/>
            <person name="Chinwalla A."/>
            <person name="Clarke L."/>
            <person name="Clee C."/>
            <person name="Coghlan A."/>
            <person name="Coulson A."/>
            <person name="D'Eustachio P."/>
            <person name="Fitch D.H.A."/>
            <person name="Fulton L.A."/>
            <person name="Fulton R.E."/>
            <person name="Griffiths-Jones S."/>
            <person name="Harris T.W."/>
            <person name="Hillier L.W."/>
            <person name="Kamath R."/>
            <person name="Kuwabara P.E."/>
            <person name="Mardis E.R."/>
            <person name="Marra M.A."/>
            <person name="Miner T.L."/>
            <person name="Minx P."/>
            <person name="Mullikin J.C."/>
            <person name="Plumb R.W."/>
            <person name="Rogers J."/>
            <person name="Schein J.E."/>
            <person name="Sohrmann M."/>
            <person name="Spieth J."/>
            <person name="Stajich J.E."/>
            <person name="Wei C."/>
            <person name="Willey D."/>
            <person name="Wilson R.K."/>
            <person name="Durbin R.M."/>
            <person name="Waterston R.H."/>
        </authorList>
    </citation>
    <scope>NUCLEOTIDE SEQUENCE [LARGE SCALE GENOMIC DNA]</scope>
    <source>
        <strain>AF16</strain>
    </source>
</reference>
<organism>
    <name type="scientific">Caenorhabditis briggsae</name>
    <dbReference type="NCBI Taxonomy" id="6238"/>
    <lineage>
        <taxon>Eukaryota</taxon>
        <taxon>Metazoa</taxon>
        <taxon>Ecdysozoa</taxon>
        <taxon>Nematoda</taxon>
        <taxon>Chromadorea</taxon>
        <taxon>Rhabditida</taxon>
        <taxon>Rhabditina</taxon>
        <taxon>Rhabditomorpha</taxon>
        <taxon>Rhabditoidea</taxon>
        <taxon>Rhabditidae</taxon>
        <taxon>Peloderinae</taxon>
        <taxon>Caenorhabditis</taxon>
    </lineage>
</organism>
<protein>
    <recommendedName>
        <fullName>Mitochondrial import inner membrane translocase subunit TIM14</fullName>
    </recommendedName>
    <alternativeName>
        <fullName>DnaJ homolog subfamily C member 21</fullName>
    </alternativeName>
</protein>
<evidence type="ECO:0000250" key="1"/>
<evidence type="ECO:0000255" key="2"/>
<evidence type="ECO:0000255" key="3">
    <source>
        <dbReference type="PROSITE-ProRule" id="PRU00286"/>
    </source>
</evidence>
<evidence type="ECO:0000305" key="4"/>
<gene>
    <name type="primary">dnj-21</name>
    <name type="synonym">tim-14</name>
    <name type="ORF">CBG14915</name>
</gene>
<dbReference type="EMBL" id="HE600904">
    <property type="protein sequence ID" value="CAP33319.1"/>
    <property type="molecule type" value="Genomic_DNA"/>
</dbReference>
<dbReference type="SMR" id="Q617M0"/>
<dbReference type="FunCoup" id="Q617M0">
    <property type="interactions" value="2230"/>
</dbReference>
<dbReference type="STRING" id="6238.Q617M0"/>
<dbReference type="EnsemblMetazoa" id="CBG14915.1">
    <property type="protein sequence ID" value="CBG14915.1"/>
    <property type="gene ID" value="WBGene00035289"/>
</dbReference>
<dbReference type="KEGG" id="cbr:CBG_14915"/>
<dbReference type="CTD" id="8581090"/>
<dbReference type="WormBase" id="CBG14915">
    <property type="protein sequence ID" value="CBP03416"/>
    <property type="gene ID" value="WBGene00035289"/>
    <property type="gene designation" value="Cbr-dnj-21"/>
</dbReference>
<dbReference type="eggNOG" id="KOG0723">
    <property type="taxonomic scope" value="Eukaryota"/>
</dbReference>
<dbReference type="HOGENOM" id="CLU_017633_13_3_1"/>
<dbReference type="InParanoid" id="Q617M0"/>
<dbReference type="OMA" id="NGMSKYY"/>
<dbReference type="OrthoDB" id="240298at2759"/>
<dbReference type="Proteomes" id="UP000008549">
    <property type="component" value="Unassembled WGS sequence"/>
</dbReference>
<dbReference type="GO" id="GO:0001405">
    <property type="term" value="C:PAM complex, Tim23 associated import motor"/>
    <property type="evidence" value="ECO:0000318"/>
    <property type="project" value="GO_Central"/>
</dbReference>
<dbReference type="GO" id="GO:0001671">
    <property type="term" value="F:ATPase activator activity"/>
    <property type="evidence" value="ECO:0000318"/>
    <property type="project" value="GO_Central"/>
</dbReference>
<dbReference type="GO" id="GO:0030150">
    <property type="term" value="P:protein import into mitochondrial matrix"/>
    <property type="evidence" value="ECO:0000318"/>
    <property type="project" value="GO_Central"/>
</dbReference>
<dbReference type="CDD" id="cd06257">
    <property type="entry name" value="DnaJ"/>
    <property type="match status" value="1"/>
</dbReference>
<dbReference type="FunFam" id="1.10.287.110:FF:000001">
    <property type="entry name" value="Import inner membrane translocase subunit tim14"/>
    <property type="match status" value="1"/>
</dbReference>
<dbReference type="Gene3D" id="1.10.287.110">
    <property type="entry name" value="DnaJ domain"/>
    <property type="match status" value="1"/>
</dbReference>
<dbReference type="InterPro" id="IPR001623">
    <property type="entry name" value="DnaJ_domain"/>
</dbReference>
<dbReference type="InterPro" id="IPR036869">
    <property type="entry name" value="J_dom_sf"/>
</dbReference>
<dbReference type="PANTHER" id="PTHR12763">
    <property type="match status" value="1"/>
</dbReference>
<dbReference type="PANTHER" id="PTHR12763:SF28">
    <property type="entry name" value="GEO10507P1-RELATED"/>
    <property type="match status" value="1"/>
</dbReference>
<dbReference type="SMART" id="SM00271">
    <property type="entry name" value="DnaJ"/>
    <property type="match status" value="1"/>
</dbReference>
<dbReference type="SUPFAM" id="SSF46565">
    <property type="entry name" value="Chaperone J-domain"/>
    <property type="match status" value="1"/>
</dbReference>
<dbReference type="PROSITE" id="PS50076">
    <property type="entry name" value="DNAJ_2"/>
    <property type="match status" value="1"/>
</dbReference>